<dbReference type="EC" id="3.4.21.89" evidence="1"/>
<dbReference type="EMBL" id="CH408055">
    <property type="protein sequence ID" value="EDV09468.1"/>
    <property type="molecule type" value="Genomic_DNA"/>
</dbReference>
<dbReference type="SMR" id="B3LTI7"/>
<dbReference type="MEROPS" id="S26.010"/>
<dbReference type="GlyCosmos" id="B3LTI7">
    <property type="glycosylation" value="1 site, No reported glycans"/>
</dbReference>
<dbReference type="HOGENOM" id="CLU_089996_0_0_1"/>
<dbReference type="OrthoDB" id="23680at4893"/>
<dbReference type="Proteomes" id="UP000008335">
    <property type="component" value="Unassembled WGS sequence"/>
</dbReference>
<dbReference type="GO" id="GO:0005787">
    <property type="term" value="C:signal peptidase complex"/>
    <property type="evidence" value="ECO:0007669"/>
    <property type="project" value="TreeGrafter"/>
</dbReference>
<dbReference type="GO" id="GO:0004252">
    <property type="term" value="F:serine-type endopeptidase activity"/>
    <property type="evidence" value="ECO:0007669"/>
    <property type="project" value="UniProtKB-EC"/>
</dbReference>
<dbReference type="GO" id="GO:0006465">
    <property type="term" value="P:signal peptide processing"/>
    <property type="evidence" value="ECO:0007669"/>
    <property type="project" value="InterPro"/>
</dbReference>
<dbReference type="CDD" id="cd06462">
    <property type="entry name" value="Peptidase_S24_S26"/>
    <property type="match status" value="1"/>
</dbReference>
<dbReference type="InterPro" id="IPR036286">
    <property type="entry name" value="LexA/Signal_pep-like_sf"/>
</dbReference>
<dbReference type="InterPro" id="IPR019758">
    <property type="entry name" value="Pept_S26A_signal_pept_1_CS"/>
</dbReference>
<dbReference type="InterPro" id="IPR019756">
    <property type="entry name" value="Pept_S26A_signal_pept_1_Ser-AS"/>
</dbReference>
<dbReference type="InterPro" id="IPR015927">
    <property type="entry name" value="Peptidase_S24_S26A/B/C"/>
</dbReference>
<dbReference type="InterPro" id="IPR001733">
    <property type="entry name" value="Peptidase_S26B"/>
</dbReference>
<dbReference type="NCBIfam" id="TIGR02228">
    <property type="entry name" value="sigpep_I_arch"/>
    <property type="match status" value="1"/>
</dbReference>
<dbReference type="PANTHER" id="PTHR10806">
    <property type="entry name" value="SIGNAL PEPTIDASE COMPLEX CATALYTIC SUBUNIT SEC11"/>
    <property type="match status" value="1"/>
</dbReference>
<dbReference type="PANTHER" id="PTHR10806:SF6">
    <property type="entry name" value="SIGNAL PEPTIDASE COMPLEX CATALYTIC SUBUNIT SEC11"/>
    <property type="match status" value="1"/>
</dbReference>
<dbReference type="Pfam" id="PF00717">
    <property type="entry name" value="Peptidase_S24"/>
    <property type="match status" value="1"/>
</dbReference>
<dbReference type="PRINTS" id="PR00728">
    <property type="entry name" value="SIGNALPTASE"/>
</dbReference>
<dbReference type="SUPFAM" id="SSF51306">
    <property type="entry name" value="LexA/Signal peptidase"/>
    <property type="match status" value="1"/>
</dbReference>
<dbReference type="PROSITE" id="PS00501">
    <property type="entry name" value="SPASE_I_1"/>
    <property type="match status" value="1"/>
</dbReference>
<dbReference type="PROSITE" id="PS00761">
    <property type="entry name" value="SPASE_I_3"/>
    <property type="match status" value="1"/>
</dbReference>
<accession>B3LTI7</accession>
<protein>
    <recommendedName>
        <fullName>Signal peptidase complex catalytic subunit SEC11</fullName>
        <ecNumber evidence="1">3.4.21.89</ecNumber>
    </recommendedName>
    <alternativeName>
        <fullName>Secretory protein 11</fullName>
    </alternativeName>
    <alternativeName>
        <fullName>Signal peptidase I</fullName>
    </alternativeName>
</protein>
<keyword id="KW-0256">Endoplasmic reticulum</keyword>
<keyword id="KW-0325">Glycoprotein</keyword>
<keyword id="KW-0378">Hydrolase</keyword>
<keyword id="KW-0472">Membrane</keyword>
<keyword id="KW-0645">Protease</keyword>
<keyword id="KW-0735">Signal-anchor</keyword>
<keyword id="KW-0812">Transmembrane</keyword>
<keyword id="KW-1133">Transmembrane helix</keyword>
<feature type="chain" id="PRO_0000412359" description="Signal peptidase complex catalytic subunit SEC11">
    <location>
        <begin position="1"/>
        <end position="167"/>
    </location>
</feature>
<feature type="topological domain" description="Cytoplasmic" evidence="3">
    <location>
        <begin position="1"/>
        <end position="9"/>
    </location>
</feature>
<feature type="transmembrane region" description="Helical; Signal-anchor for type II membrane protein" evidence="3">
    <location>
        <begin position="10"/>
        <end position="30"/>
    </location>
</feature>
<feature type="topological domain" description="Lumenal" evidence="3">
    <location>
        <begin position="31"/>
        <end position="167"/>
    </location>
</feature>
<feature type="region of interest" description="C-terminal short (CTS) helix" evidence="2">
    <location>
        <begin position="153"/>
        <end position="164"/>
    </location>
</feature>
<feature type="active site" description="Charge relay system" evidence="1">
    <location>
        <position position="44"/>
    </location>
</feature>
<feature type="active site" description="Charge relay system" evidence="1">
    <location>
        <position position="83"/>
    </location>
</feature>
<feature type="active site" description="Charge relay system" evidence="1">
    <location>
        <position position="109"/>
    </location>
</feature>
<feature type="glycosylation site" description="N-linked (GlcNAc...) asparagine" evidence="3">
    <location>
        <position position="121"/>
    </location>
</feature>
<comment type="function">
    <text evidence="1 2">Catalytic component of the signal peptidase complex (SPC) which catalyzes the cleavage of N-terminal signal sequences from nascent proteins as they are translocated into the lumen of the endoplasmic reticulum (By similarity). Specifically cleaves N-terminal signal peptides that contain a hydrophobic alpha-helix (h-region) shorter than 18-20 amino acids (By similarity).</text>
</comment>
<comment type="catalytic activity">
    <reaction evidence="1">
        <text>Cleavage of hydrophobic, N-terminal signal or leader sequences from secreted and periplasmic proteins.</text>
        <dbReference type="EC" id="3.4.21.89"/>
    </reaction>
</comment>
<comment type="subunit">
    <text evidence="1 2">Component of the signal peptidase complex (SPC) composed of a catalytic subunit SEC11 and three accessory subunits SPC1, SPC2 and SPC3 (By similarity). The complex induces a local thinning of the ER membrane which is used to measure the length of the signal peptide (SP) h-region of protein substrates. This ensures the selectivity of the complex towards h-regions shorter than 18-20 amino acids (By similarity). SPC associates with the translocon complex (By similarity).</text>
</comment>
<comment type="subcellular location">
    <subcellularLocation>
        <location evidence="1">Endoplasmic reticulum membrane</location>
        <topology evidence="1">Single-pass type II membrane protein</topology>
    </subcellularLocation>
</comment>
<comment type="domain">
    <text evidence="2">The C-terminal short (CTS) helix is essential for catalytic activity. It may be accommodated as a transmembrane helix in the thinned membrane environment of the complex, similarly to the signal peptide in the complex substrates.</text>
</comment>
<comment type="similarity">
    <text evidence="4">Belongs to the peptidase S26B family.</text>
</comment>
<evidence type="ECO:0000250" key="1">
    <source>
        <dbReference type="UniProtKB" id="P15367"/>
    </source>
</evidence>
<evidence type="ECO:0000250" key="2">
    <source>
        <dbReference type="UniProtKB" id="P67812"/>
    </source>
</evidence>
<evidence type="ECO:0000255" key="3"/>
<evidence type="ECO:0000305" key="4"/>
<name>SEC11_YEAS1</name>
<reference key="1">
    <citation type="submission" date="2005-03" db="EMBL/GenBank/DDBJ databases">
        <title>Annotation of the Saccharomyces cerevisiae RM11-1a genome.</title>
        <authorList>
            <consortium name="The Broad Institute Genome Sequencing Platform"/>
            <person name="Birren B.W."/>
            <person name="Lander E.S."/>
            <person name="Galagan J.E."/>
            <person name="Nusbaum C."/>
            <person name="Devon K."/>
            <person name="Cuomo C."/>
            <person name="Jaffe D.B."/>
            <person name="Butler J."/>
            <person name="Alvarez P."/>
            <person name="Gnerre S."/>
            <person name="Grabherr M."/>
            <person name="Kleber M."/>
            <person name="Mauceli E.W."/>
            <person name="Brockman W."/>
            <person name="MacCallum I.A."/>
            <person name="Rounsley S."/>
            <person name="Young S.K."/>
            <person name="LaButti K."/>
            <person name="Pushparaj V."/>
            <person name="DeCaprio D."/>
            <person name="Crawford M."/>
            <person name="Koehrsen M."/>
            <person name="Engels R."/>
            <person name="Montgomery P."/>
            <person name="Pearson M."/>
            <person name="Howarth C."/>
            <person name="Larson L."/>
            <person name="Luoma S."/>
            <person name="White J."/>
            <person name="O'Leary S."/>
            <person name="Kodira C.D."/>
            <person name="Zeng Q."/>
            <person name="Yandava C."/>
            <person name="Alvarado L."/>
            <person name="Pratt S."/>
            <person name="Kruglyak L."/>
        </authorList>
    </citation>
    <scope>NUCLEOTIDE SEQUENCE [LARGE SCALE GENOMIC DNA]</scope>
    <source>
        <strain>RM11-1a</strain>
    </source>
</reference>
<proteinExistence type="inferred from homology"/>
<sequence length="167" mass="18762">MNLRFELQKLLNVCFLFASAYMFWQGLAIATNSASPIVVVLSGSMEPAFQRGDILFLWNRNTFNQVGDVVVYEVEGKQIPIVHRVLRQHNNHADKQFLLTKGDNNAGNDISLYANKKIYLNKSKEIVGTVKGYFPQLGYITIWISENKYAKFALLGMLGLSALLGGE</sequence>
<gene>
    <name type="primary">SEC11</name>
    <name type="ORF">SCRG_05156</name>
</gene>
<organism>
    <name type="scientific">Saccharomyces cerevisiae (strain RM11-1a)</name>
    <name type="common">Baker's yeast</name>
    <dbReference type="NCBI Taxonomy" id="285006"/>
    <lineage>
        <taxon>Eukaryota</taxon>
        <taxon>Fungi</taxon>
        <taxon>Dikarya</taxon>
        <taxon>Ascomycota</taxon>
        <taxon>Saccharomycotina</taxon>
        <taxon>Saccharomycetes</taxon>
        <taxon>Saccharomycetales</taxon>
        <taxon>Saccharomycetaceae</taxon>
        <taxon>Saccharomyces</taxon>
    </lineage>
</organism>